<evidence type="ECO:0000255" key="1">
    <source>
        <dbReference type="HAMAP-Rule" id="MF_01849"/>
    </source>
</evidence>
<evidence type="ECO:0000255" key="2">
    <source>
        <dbReference type="PROSITE-ProRule" id="PRU01266"/>
    </source>
</evidence>
<sequence length="414" mass="46693">MAISYNHSMSACQKIKTDQAMVRDRLKQSQSLIGLSHDEMVQALRSIGVPEHQTRMRVRQLWHWFYVRGVSSFDEMFNISKPMREMLKDNFSIAYPEIVEEQISKDGTYKWLLRFPARGAGKPVEIETVYIPGEGRGTLCVSSQVGCTLTCSFCYTGTQKLVRNLTAEEILLQLLFARNRLGDFPGKDKPDHSSLSEERRKITNIVMMGMGEPLYNFEAVKKALLIASDGDGLSLSKRRITLSTSGVVPEIIRAGEEIGVMLAVSLHAVCDSLRDVLVPINKKYPLSMLMEACRNYPGLSNAKRITFEYVMLKDVNDSLDDAKKLIKLLKGIPAKINLIPFNPWPGSHYECSDWEQIERFADVINRAGYASPIRMPRGRDILAACGNLKSTSERLRKSERLQLESMMGDDLSSI</sequence>
<proteinExistence type="inferred from homology"/>
<dbReference type="EC" id="2.1.1.192" evidence="1"/>
<dbReference type="EMBL" id="CP000524">
    <property type="protein sequence ID" value="ABM44745.1"/>
    <property type="molecule type" value="Genomic_DNA"/>
</dbReference>
<dbReference type="RefSeq" id="WP_005768181.1">
    <property type="nucleotide sequence ID" value="NC_008783.1"/>
</dbReference>
<dbReference type="SMR" id="A1UUF7"/>
<dbReference type="STRING" id="360095.BARBAKC583_1362"/>
<dbReference type="GeneID" id="4684827"/>
<dbReference type="KEGG" id="bbk:BARBAKC583_1362"/>
<dbReference type="PATRIC" id="fig|360095.6.peg.1337"/>
<dbReference type="eggNOG" id="COG0820">
    <property type="taxonomic scope" value="Bacteria"/>
</dbReference>
<dbReference type="HOGENOM" id="CLU_029101_2_0_5"/>
<dbReference type="OrthoDB" id="9793973at2"/>
<dbReference type="Proteomes" id="UP000000643">
    <property type="component" value="Chromosome"/>
</dbReference>
<dbReference type="GO" id="GO:0005737">
    <property type="term" value="C:cytoplasm"/>
    <property type="evidence" value="ECO:0007669"/>
    <property type="project" value="UniProtKB-SubCell"/>
</dbReference>
<dbReference type="GO" id="GO:0051539">
    <property type="term" value="F:4 iron, 4 sulfur cluster binding"/>
    <property type="evidence" value="ECO:0007669"/>
    <property type="project" value="UniProtKB-UniRule"/>
</dbReference>
<dbReference type="GO" id="GO:0046872">
    <property type="term" value="F:metal ion binding"/>
    <property type="evidence" value="ECO:0007669"/>
    <property type="project" value="UniProtKB-KW"/>
</dbReference>
<dbReference type="GO" id="GO:0070040">
    <property type="term" value="F:rRNA (adenine(2503)-C2-)-methyltransferase activity"/>
    <property type="evidence" value="ECO:0007669"/>
    <property type="project" value="UniProtKB-UniRule"/>
</dbReference>
<dbReference type="GO" id="GO:0019843">
    <property type="term" value="F:rRNA binding"/>
    <property type="evidence" value="ECO:0007669"/>
    <property type="project" value="UniProtKB-UniRule"/>
</dbReference>
<dbReference type="GO" id="GO:0002935">
    <property type="term" value="F:tRNA (adenine(37)-C2)-methyltransferase activity"/>
    <property type="evidence" value="ECO:0007669"/>
    <property type="project" value="UniProtKB-UniRule"/>
</dbReference>
<dbReference type="GO" id="GO:0000049">
    <property type="term" value="F:tRNA binding"/>
    <property type="evidence" value="ECO:0007669"/>
    <property type="project" value="UniProtKB-UniRule"/>
</dbReference>
<dbReference type="GO" id="GO:0070475">
    <property type="term" value="P:rRNA base methylation"/>
    <property type="evidence" value="ECO:0007669"/>
    <property type="project" value="UniProtKB-UniRule"/>
</dbReference>
<dbReference type="GO" id="GO:0030488">
    <property type="term" value="P:tRNA methylation"/>
    <property type="evidence" value="ECO:0007669"/>
    <property type="project" value="UniProtKB-UniRule"/>
</dbReference>
<dbReference type="CDD" id="cd01335">
    <property type="entry name" value="Radical_SAM"/>
    <property type="match status" value="1"/>
</dbReference>
<dbReference type="FunFam" id="3.20.20.70:FF:000008">
    <property type="entry name" value="Dual-specificity RNA methyltransferase RlmN"/>
    <property type="match status" value="1"/>
</dbReference>
<dbReference type="Gene3D" id="1.10.150.530">
    <property type="match status" value="1"/>
</dbReference>
<dbReference type="Gene3D" id="3.20.20.70">
    <property type="entry name" value="Aldolase class I"/>
    <property type="match status" value="1"/>
</dbReference>
<dbReference type="HAMAP" id="MF_01849">
    <property type="entry name" value="RNA_methyltr_RlmN"/>
    <property type="match status" value="1"/>
</dbReference>
<dbReference type="InterPro" id="IPR013785">
    <property type="entry name" value="Aldolase_TIM"/>
</dbReference>
<dbReference type="InterPro" id="IPR040072">
    <property type="entry name" value="Methyltransferase_A"/>
</dbReference>
<dbReference type="InterPro" id="IPR048641">
    <property type="entry name" value="RlmN_N"/>
</dbReference>
<dbReference type="InterPro" id="IPR027492">
    <property type="entry name" value="RNA_MTrfase_RlmN"/>
</dbReference>
<dbReference type="InterPro" id="IPR004383">
    <property type="entry name" value="rRNA_lsu_MTrfase_RlmN/Cfr"/>
</dbReference>
<dbReference type="InterPro" id="IPR007197">
    <property type="entry name" value="rSAM"/>
</dbReference>
<dbReference type="NCBIfam" id="TIGR00048">
    <property type="entry name" value="rRNA_mod_RlmN"/>
    <property type="match status" value="1"/>
</dbReference>
<dbReference type="PANTHER" id="PTHR30544">
    <property type="entry name" value="23S RRNA METHYLTRANSFERASE"/>
    <property type="match status" value="1"/>
</dbReference>
<dbReference type="PANTHER" id="PTHR30544:SF5">
    <property type="entry name" value="RADICAL SAM CORE DOMAIN-CONTAINING PROTEIN"/>
    <property type="match status" value="1"/>
</dbReference>
<dbReference type="Pfam" id="PF04055">
    <property type="entry name" value="Radical_SAM"/>
    <property type="match status" value="1"/>
</dbReference>
<dbReference type="Pfam" id="PF21016">
    <property type="entry name" value="RlmN_N"/>
    <property type="match status" value="1"/>
</dbReference>
<dbReference type="PIRSF" id="PIRSF006004">
    <property type="entry name" value="CHP00048"/>
    <property type="match status" value="1"/>
</dbReference>
<dbReference type="SFLD" id="SFLDF00275">
    <property type="entry name" value="adenosine_C2_methyltransferase"/>
    <property type="match status" value="1"/>
</dbReference>
<dbReference type="SFLD" id="SFLDG01062">
    <property type="entry name" value="methyltransferase_(Class_A)"/>
    <property type="match status" value="1"/>
</dbReference>
<dbReference type="SUPFAM" id="SSF102114">
    <property type="entry name" value="Radical SAM enzymes"/>
    <property type="match status" value="1"/>
</dbReference>
<dbReference type="PROSITE" id="PS51918">
    <property type="entry name" value="RADICAL_SAM"/>
    <property type="match status" value="1"/>
</dbReference>
<gene>
    <name evidence="1" type="primary">rlmN</name>
    <name type="ordered locus">BARBAKC583_1362</name>
</gene>
<name>RLMN_BARBK</name>
<protein>
    <recommendedName>
        <fullName evidence="1">Dual-specificity RNA methyltransferase RlmN</fullName>
        <ecNumber evidence="1">2.1.1.192</ecNumber>
    </recommendedName>
    <alternativeName>
        <fullName evidence="1">23S rRNA (adenine(2503)-C(2))-methyltransferase</fullName>
    </alternativeName>
    <alternativeName>
        <fullName evidence="1">23S rRNA m2A2503 methyltransferase</fullName>
    </alternativeName>
    <alternativeName>
        <fullName evidence="1">Ribosomal RNA large subunit methyltransferase N</fullName>
    </alternativeName>
    <alternativeName>
        <fullName evidence="1">tRNA (adenine(37)-C(2))-methyltransferase</fullName>
    </alternativeName>
    <alternativeName>
        <fullName evidence="1">tRNA m2A37 methyltransferase</fullName>
    </alternativeName>
</protein>
<reference key="1">
    <citation type="submission" date="2006-12" db="EMBL/GenBank/DDBJ databases">
        <authorList>
            <person name="Hendrix L."/>
            <person name="Mohamoud Y."/>
            <person name="Radune D."/>
            <person name="Shvartsbeyn A."/>
            <person name="Daugherty S."/>
            <person name="Dodson R."/>
            <person name="Durkin A.S."/>
            <person name="Harkins D."/>
            <person name="Huot H."/>
            <person name="Kothari S.P."/>
            <person name="Madupu R."/>
            <person name="Li J."/>
            <person name="Nelson W.C."/>
            <person name="Shrivastava S."/>
            <person name="Giglio M.G."/>
            <person name="Haft D."/>
            <person name="Selengut J."/>
            <person name="Fraser-Ligget C."/>
            <person name="Seshadri R."/>
        </authorList>
    </citation>
    <scope>NUCLEOTIDE SEQUENCE [LARGE SCALE GENOMIC DNA]</scope>
    <source>
        <strain>ATCC 35685 / KC583 / Herrer 020/F12,63</strain>
    </source>
</reference>
<comment type="function">
    <text evidence="1">Specifically methylates position 2 of adenine 2503 in 23S rRNA and position 2 of adenine 37 in tRNAs. m2A2503 modification seems to play a crucial role in the proofreading step occurring at the peptidyl transferase center and thus would serve to optimize ribosomal fidelity.</text>
</comment>
<comment type="catalytic activity">
    <reaction evidence="1">
        <text>adenosine(2503) in 23S rRNA + 2 reduced [2Fe-2S]-[ferredoxin] + 2 S-adenosyl-L-methionine = 2-methyladenosine(2503) in 23S rRNA + 5'-deoxyadenosine + L-methionine + 2 oxidized [2Fe-2S]-[ferredoxin] + S-adenosyl-L-homocysteine</text>
        <dbReference type="Rhea" id="RHEA:42916"/>
        <dbReference type="Rhea" id="RHEA-COMP:10000"/>
        <dbReference type="Rhea" id="RHEA-COMP:10001"/>
        <dbReference type="Rhea" id="RHEA-COMP:10152"/>
        <dbReference type="Rhea" id="RHEA-COMP:10282"/>
        <dbReference type="ChEBI" id="CHEBI:17319"/>
        <dbReference type="ChEBI" id="CHEBI:33737"/>
        <dbReference type="ChEBI" id="CHEBI:33738"/>
        <dbReference type="ChEBI" id="CHEBI:57844"/>
        <dbReference type="ChEBI" id="CHEBI:57856"/>
        <dbReference type="ChEBI" id="CHEBI:59789"/>
        <dbReference type="ChEBI" id="CHEBI:74411"/>
        <dbReference type="ChEBI" id="CHEBI:74497"/>
        <dbReference type="EC" id="2.1.1.192"/>
    </reaction>
</comment>
<comment type="catalytic activity">
    <reaction evidence="1">
        <text>adenosine(37) in tRNA + 2 reduced [2Fe-2S]-[ferredoxin] + 2 S-adenosyl-L-methionine = 2-methyladenosine(37) in tRNA + 5'-deoxyadenosine + L-methionine + 2 oxidized [2Fe-2S]-[ferredoxin] + S-adenosyl-L-homocysteine</text>
        <dbReference type="Rhea" id="RHEA:43332"/>
        <dbReference type="Rhea" id="RHEA-COMP:10000"/>
        <dbReference type="Rhea" id="RHEA-COMP:10001"/>
        <dbReference type="Rhea" id="RHEA-COMP:10162"/>
        <dbReference type="Rhea" id="RHEA-COMP:10485"/>
        <dbReference type="ChEBI" id="CHEBI:17319"/>
        <dbReference type="ChEBI" id="CHEBI:33737"/>
        <dbReference type="ChEBI" id="CHEBI:33738"/>
        <dbReference type="ChEBI" id="CHEBI:57844"/>
        <dbReference type="ChEBI" id="CHEBI:57856"/>
        <dbReference type="ChEBI" id="CHEBI:59789"/>
        <dbReference type="ChEBI" id="CHEBI:74411"/>
        <dbReference type="ChEBI" id="CHEBI:74497"/>
        <dbReference type="EC" id="2.1.1.192"/>
    </reaction>
</comment>
<comment type="cofactor">
    <cofactor evidence="1">
        <name>[4Fe-4S] cluster</name>
        <dbReference type="ChEBI" id="CHEBI:49883"/>
    </cofactor>
    <text evidence="1">Binds 1 [4Fe-4S] cluster. The cluster is coordinated with 3 cysteines and an exchangeable S-adenosyl-L-methionine.</text>
</comment>
<comment type="subcellular location">
    <subcellularLocation>
        <location evidence="1">Cytoplasm</location>
    </subcellularLocation>
</comment>
<comment type="miscellaneous">
    <text evidence="1">Reaction proceeds by a ping-pong mechanism involving intermediate methylation of a conserved cysteine residue.</text>
</comment>
<comment type="similarity">
    <text evidence="1">Belongs to the radical SAM superfamily. RlmN family.</text>
</comment>
<organism>
    <name type="scientific">Bartonella bacilliformis (strain ATCC 35685 / KC583 / Herrer 020/F12,63)</name>
    <dbReference type="NCBI Taxonomy" id="360095"/>
    <lineage>
        <taxon>Bacteria</taxon>
        <taxon>Pseudomonadati</taxon>
        <taxon>Pseudomonadota</taxon>
        <taxon>Alphaproteobacteria</taxon>
        <taxon>Hyphomicrobiales</taxon>
        <taxon>Bartonellaceae</taxon>
        <taxon>Bartonella</taxon>
    </lineage>
</organism>
<keyword id="KW-0004">4Fe-4S</keyword>
<keyword id="KW-0963">Cytoplasm</keyword>
<keyword id="KW-1015">Disulfide bond</keyword>
<keyword id="KW-0408">Iron</keyword>
<keyword id="KW-0411">Iron-sulfur</keyword>
<keyword id="KW-0479">Metal-binding</keyword>
<keyword id="KW-0489">Methyltransferase</keyword>
<keyword id="KW-0698">rRNA processing</keyword>
<keyword id="KW-0949">S-adenosyl-L-methionine</keyword>
<keyword id="KW-0808">Transferase</keyword>
<keyword id="KW-0819">tRNA processing</keyword>
<accession>A1UUF7</accession>
<feature type="chain" id="PRO_0000350044" description="Dual-specificity RNA methyltransferase RlmN">
    <location>
        <begin position="1"/>
        <end position="414"/>
    </location>
</feature>
<feature type="domain" description="Radical SAM core" evidence="2">
    <location>
        <begin position="133"/>
        <end position="380"/>
    </location>
</feature>
<feature type="active site" description="Proton acceptor" evidence="1">
    <location>
        <position position="127"/>
    </location>
</feature>
<feature type="active site" description="S-methylcysteine intermediate" evidence="1">
    <location>
        <position position="385"/>
    </location>
</feature>
<feature type="binding site" evidence="1">
    <location>
        <position position="147"/>
    </location>
    <ligand>
        <name>[4Fe-4S] cluster</name>
        <dbReference type="ChEBI" id="CHEBI:49883"/>
        <note>4Fe-4S-S-AdoMet</note>
    </ligand>
</feature>
<feature type="binding site" evidence="1">
    <location>
        <position position="151"/>
    </location>
    <ligand>
        <name>[4Fe-4S] cluster</name>
        <dbReference type="ChEBI" id="CHEBI:49883"/>
        <note>4Fe-4S-S-AdoMet</note>
    </ligand>
</feature>
<feature type="binding site" evidence="1">
    <location>
        <position position="154"/>
    </location>
    <ligand>
        <name>[4Fe-4S] cluster</name>
        <dbReference type="ChEBI" id="CHEBI:49883"/>
        <note>4Fe-4S-S-AdoMet</note>
    </ligand>
</feature>
<feature type="binding site" evidence="1">
    <location>
        <begin position="211"/>
        <end position="212"/>
    </location>
    <ligand>
        <name>S-adenosyl-L-methionine</name>
        <dbReference type="ChEBI" id="CHEBI:59789"/>
    </ligand>
</feature>
<feature type="binding site" evidence="1">
    <location>
        <position position="243"/>
    </location>
    <ligand>
        <name>S-adenosyl-L-methionine</name>
        <dbReference type="ChEBI" id="CHEBI:59789"/>
    </ligand>
</feature>
<feature type="binding site" evidence="1">
    <location>
        <begin position="265"/>
        <end position="267"/>
    </location>
    <ligand>
        <name>S-adenosyl-L-methionine</name>
        <dbReference type="ChEBI" id="CHEBI:59789"/>
    </ligand>
</feature>
<feature type="binding site" evidence="1">
    <location>
        <position position="342"/>
    </location>
    <ligand>
        <name>S-adenosyl-L-methionine</name>
        <dbReference type="ChEBI" id="CHEBI:59789"/>
    </ligand>
</feature>
<feature type="disulfide bond" description="(transient)" evidence="1">
    <location>
        <begin position="140"/>
        <end position="385"/>
    </location>
</feature>